<keyword id="KW-1185">Reference proteome</keyword>
<comment type="similarity">
    <text evidence="2">To M.pneumoniae MPN_091 and MPN_463.</text>
</comment>
<sequence length="139" mass="15796">MGGWMSCGPPIYTPHTNSWTESGWDRTSWWRWSAQRWSGWSFKIVRANKALRVMAKTKMPLVLIPPSPNKPYSKLAINQELHLIPPKKTSPATSSSLKPPRRPRGCLNGRLSWRCPTLSRKVRVPTIKVPMVRAPSTPP</sequence>
<dbReference type="EMBL" id="U00089">
    <property type="protein sequence ID" value="AAG34747.1"/>
    <property type="molecule type" value="Genomic_DNA"/>
</dbReference>
<dbReference type="RefSeq" id="NP_110101.1">
    <property type="nucleotide sequence ID" value="NC_000912.1"/>
</dbReference>
<dbReference type="RefSeq" id="WP_010874769.1">
    <property type="nucleotide sequence ID" value="NZ_OU342337.1"/>
</dbReference>
<dbReference type="IntAct" id="Q9EXD6">
    <property type="interactions" value="1"/>
</dbReference>
<dbReference type="STRING" id="272634.MPN_413"/>
<dbReference type="EnsemblBacteria" id="AAG34747">
    <property type="protein sequence ID" value="AAG34747"/>
    <property type="gene ID" value="MPN_413"/>
</dbReference>
<dbReference type="KEGG" id="mpn:MPN_413"/>
<dbReference type="HOGENOM" id="CLU_1675942_0_0_14"/>
<dbReference type="BioCyc" id="MPNE272634:G1GJ3-670-MONOMER"/>
<dbReference type="Proteomes" id="UP000000808">
    <property type="component" value="Chromosome"/>
</dbReference>
<organism>
    <name type="scientific">Mycoplasma pneumoniae (strain ATCC 29342 / M129 / Subtype 1)</name>
    <name type="common">Mycoplasmoides pneumoniae</name>
    <dbReference type="NCBI Taxonomy" id="272634"/>
    <lineage>
        <taxon>Bacteria</taxon>
        <taxon>Bacillati</taxon>
        <taxon>Mycoplasmatota</taxon>
        <taxon>Mycoplasmoidales</taxon>
        <taxon>Mycoplasmoidaceae</taxon>
        <taxon>Mycoplasmoides</taxon>
    </lineage>
</organism>
<reference key="1">
    <citation type="journal article" date="1996" name="Nucleic Acids Res.">
        <title>Complete sequence analysis of the genome of the bacterium Mycoplasma pneumoniae.</title>
        <authorList>
            <person name="Himmelreich R."/>
            <person name="Hilbert H."/>
            <person name="Plagens H."/>
            <person name="Pirkl E."/>
            <person name="Li B.-C."/>
            <person name="Herrmann R."/>
        </authorList>
    </citation>
    <scope>NUCLEOTIDE SEQUENCE [LARGE SCALE GENOMIC DNA]</scope>
    <source>
        <strain>ATCC 29342 / M129 / Subtype 1</strain>
    </source>
</reference>
<reference key="2">
    <citation type="journal article" date="2000" name="Nucleic Acids Res.">
        <title>Re-annotating the Mycoplasma pneumoniae genome sequence: adding value, function and reading frames.</title>
        <authorList>
            <person name="Dandekar T."/>
            <person name="Huynen M."/>
            <person name="Regula J.T."/>
            <person name="Ueberle B."/>
            <person name="Zimmermann C.U."/>
            <person name="Andrade M.A."/>
            <person name="Doerks T."/>
            <person name="Sanchez-Pulido L."/>
            <person name="Snel B."/>
            <person name="Suyama M."/>
            <person name="Yuan Y.P."/>
            <person name="Herrmann R."/>
            <person name="Bork P."/>
        </authorList>
    </citation>
    <scope>IDENTIFICATION</scope>
    <source>
        <strain>ATCC 29342 / M129 / Subtype 1</strain>
    </source>
</reference>
<evidence type="ECO:0000256" key="1">
    <source>
        <dbReference type="SAM" id="MobiDB-lite"/>
    </source>
</evidence>
<evidence type="ECO:0000305" key="2"/>
<accession>Q9EXD6</accession>
<gene>
    <name type="ordered locus">MPN_413</name>
    <name type="ORF">A05_orf139</name>
    <name type="ORF">MP426.1</name>
</gene>
<name>Y413_MYCPN</name>
<protein>
    <recommendedName>
        <fullName>Uncharacterized protein MPN_413</fullName>
    </recommendedName>
</protein>
<proteinExistence type="predicted"/>
<feature type="chain" id="PRO_0000210674" description="Uncharacterized protein MPN_413">
    <location>
        <begin position="1"/>
        <end position="139"/>
    </location>
</feature>
<feature type="region of interest" description="Disordered" evidence="1">
    <location>
        <begin position="83"/>
        <end position="109"/>
    </location>
</feature>
<feature type="compositionally biased region" description="Low complexity" evidence="1">
    <location>
        <begin position="86"/>
        <end position="98"/>
    </location>
</feature>